<reference key="1">
    <citation type="submission" date="2003-06" db="EMBL/GenBank/DDBJ databases">
        <title>The complete genome sequence of Haemophilus ducreyi.</title>
        <authorList>
            <person name="Munson R.S. Jr."/>
            <person name="Ray W.C."/>
            <person name="Mahairas G."/>
            <person name="Sabo P."/>
            <person name="Mungur R."/>
            <person name="Johnson L."/>
            <person name="Nguyen D."/>
            <person name="Wang J."/>
            <person name="Forst C."/>
            <person name="Hood L."/>
        </authorList>
    </citation>
    <scope>NUCLEOTIDE SEQUENCE [LARGE SCALE GENOMIC DNA]</scope>
    <source>
        <strain>35000HP / ATCC 700724</strain>
    </source>
</reference>
<evidence type="ECO:0000255" key="1">
    <source>
        <dbReference type="HAMAP-Rule" id="MF_00607"/>
    </source>
</evidence>
<sequence>MRTSNSKKHLGHTARKRFGQNFLSDMNVIHNIVAAINPRNEDFLLEIGPGLGALTEPVAEQVEKLTVIELDRDLAERLRHHPFLHHKLTVIEQDALRFNFRDYFDSLNLNHHQAIRIFGNLPYNISTPLMFHLFKFHDLIQDMHFMLQKEVVKRLCAAPNSKAYGRLTIMAQYYCQVIPVLEVPPTAFKPAPKVDSAVVRLMPYKTLPYPVKDVYWLNRVTTHAFNQRRKTLRNALSTLFTAQQLEMLGINLTDRAENLTISDYARLANWLCDNPPAIDTNQEILYDEL</sequence>
<name>RSMA_HAEDU</name>
<comment type="function">
    <text evidence="1">Specifically dimethylates two adjacent adenosines (A1518 and A1519) in the loop of a conserved hairpin near the 3'-end of 16S rRNA in the 30S particle. May play a critical role in biogenesis of 30S subunits.</text>
</comment>
<comment type="catalytic activity">
    <reaction evidence="1">
        <text>adenosine(1518)/adenosine(1519) in 16S rRNA + 4 S-adenosyl-L-methionine = N(6)-dimethyladenosine(1518)/N(6)-dimethyladenosine(1519) in 16S rRNA + 4 S-adenosyl-L-homocysteine + 4 H(+)</text>
        <dbReference type="Rhea" id="RHEA:19609"/>
        <dbReference type="Rhea" id="RHEA-COMP:10232"/>
        <dbReference type="Rhea" id="RHEA-COMP:10233"/>
        <dbReference type="ChEBI" id="CHEBI:15378"/>
        <dbReference type="ChEBI" id="CHEBI:57856"/>
        <dbReference type="ChEBI" id="CHEBI:59789"/>
        <dbReference type="ChEBI" id="CHEBI:74411"/>
        <dbReference type="ChEBI" id="CHEBI:74493"/>
        <dbReference type="EC" id="2.1.1.182"/>
    </reaction>
</comment>
<comment type="subcellular location">
    <subcellularLocation>
        <location evidence="1">Cytoplasm</location>
    </subcellularLocation>
</comment>
<comment type="similarity">
    <text evidence="1">Belongs to the class I-like SAM-binding methyltransferase superfamily. rRNA adenine N(6)-methyltransferase family. RsmA subfamily.</text>
</comment>
<feature type="chain" id="PRO_0000101537" description="Ribosomal RNA small subunit methyltransferase A">
    <location>
        <begin position="1"/>
        <end position="289"/>
    </location>
</feature>
<feature type="binding site" evidence="1">
    <location>
        <position position="21"/>
    </location>
    <ligand>
        <name>S-adenosyl-L-methionine</name>
        <dbReference type="ChEBI" id="CHEBI:59789"/>
    </ligand>
</feature>
<feature type="binding site" evidence="1">
    <location>
        <position position="23"/>
    </location>
    <ligand>
        <name>S-adenosyl-L-methionine</name>
        <dbReference type="ChEBI" id="CHEBI:59789"/>
    </ligand>
</feature>
<feature type="binding site" evidence="1">
    <location>
        <position position="48"/>
    </location>
    <ligand>
        <name>S-adenosyl-L-methionine</name>
        <dbReference type="ChEBI" id="CHEBI:59789"/>
    </ligand>
</feature>
<feature type="binding site" evidence="1">
    <location>
        <position position="69"/>
    </location>
    <ligand>
        <name>S-adenosyl-L-methionine</name>
        <dbReference type="ChEBI" id="CHEBI:59789"/>
    </ligand>
</feature>
<feature type="binding site" evidence="1">
    <location>
        <position position="94"/>
    </location>
    <ligand>
        <name>S-adenosyl-L-methionine</name>
        <dbReference type="ChEBI" id="CHEBI:59789"/>
    </ligand>
</feature>
<feature type="binding site" evidence="1">
    <location>
        <position position="120"/>
    </location>
    <ligand>
        <name>S-adenosyl-L-methionine</name>
        <dbReference type="ChEBI" id="CHEBI:59789"/>
    </ligand>
</feature>
<organism>
    <name type="scientific">Haemophilus ducreyi (strain 35000HP / ATCC 700724)</name>
    <dbReference type="NCBI Taxonomy" id="233412"/>
    <lineage>
        <taxon>Bacteria</taxon>
        <taxon>Pseudomonadati</taxon>
        <taxon>Pseudomonadota</taxon>
        <taxon>Gammaproteobacteria</taxon>
        <taxon>Pasteurellales</taxon>
        <taxon>Pasteurellaceae</taxon>
        <taxon>Haemophilus</taxon>
    </lineage>
</organism>
<keyword id="KW-0963">Cytoplasm</keyword>
<keyword id="KW-0489">Methyltransferase</keyword>
<keyword id="KW-1185">Reference proteome</keyword>
<keyword id="KW-0694">RNA-binding</keyword>
<keyword id="KW-0698">rRNA processing</keyword>
<keyword id="KW-0949">S-adenosyl-L-methionine</keyword>
<keyword id="KW-0808">Transferase</keyword>
<gene>
    <name evidence="1" type="primary">rsmA</name>
    <name evidence="1" type="synonym">ksgA</name>
    <name type="ordered locus">HD_1179</name>
</gene>
<proteinExistence type="inferred from homology"/>
<dbReference type="EC" id="2.1.1.182" evidence="1"/>
<dbReference type="EMBL" id="AE017143">
    <property type="protein sequence ID" value="AAP96030.1"/>
    <property type="molecule type" value="Genomic_DNA"/>
</dbReference>
<dbReference type="RefSeq" id="WP_010945079.1">
    <property type="nucleotide sequence ID" value="NC_002940.2"/>
</dbReference>
<dbReference type="SMR" id="Q7VM33"/>
<dbReference type="STRING" id="233412.HD_1179"/>
<dbReference type="GeneID" id="60734095"/>
<dbReference type="KEGG" id="hdu:HD_1179"/>
<dbReference type="eggNOG" id="COG0030">
    <property type="taxonomic scope" value="Bacteria"/>
</dbReference>
<dbReference type="HOGENOM" id="CLU_041220_0_1_6"/>
<dbReference type="OrthoDB" id="9814755at2"/>
<dbReference type="Proteomes" id="UP000001022">
    <property type="component" value="Chromosome"/>
</dbReference>
<dbReference type="GO" id="GO:0005829">
    <property type="term" value="C:cytosol"/>
    <property type="evidence" value="ECO:0007669"/>
    <property type="project" value="TreeGrafter"/>
</dbReference>
<dbReference type="GO" id="GO:0052908">
    <property type="term" value="F:16S rRNA (adenine(1518)-N(6)/adenine(1519)-N(6))-dimethyltransferase activity"/>
    <property type="evidence" value="ECO:0007669"/>
    <property type="project" value="UniProtKB-EC"/>
</dbReference>
<dbReference type="GO" id="GO:0003723">
    <property type="term" value="F:RNA binding"/>
    <property type="evidence" value="ECO:0007669"/>
    <property type="project" value="UniProtKB-KW"/>
</dbReference>
<dbReference type="CDD" id="cd02440">
    <property type="entry name" value="AdoMet_MTases"/>
    <property type="match status" value="1"/>
</dbReference>
<dbReference type="FunFam" id="1.10.8.100:FF:000001">
    <property type="entry name" value="Ribosomal RNA small subunit methyltransferase A"/>
    <property type="match status" value="1"/>
</dbReference>
<dbReference type="FunFam" id="3.40.50.150:FF:000006">
    <property type="entry name" value="Ribosomal RNA small subunit methyltransferase A"/>
    <property type="match status" value="1"/>
</dbReference>
<dbReference type="Gene3D" id="1.10.8.100">
    <property type="entry name" value="Ribosomal RNA adenine dimethylase-like, domain 2"/>
    <property type="match status" value="1"/>
</dbReference>
<dbReference type="Gene3D" id="3.40.50.150">
    <property type="entry name" value="Vaccinia Virus protein VP39"/>
    <property type="match status" value="1"/>
</dbReference>
<dbReference type="HAMAP" id="MF_00607">
    <property type="entry name" value="16SrRNA_methyltr_A"/>
    <property type="match status" value="1"/>
</dbReference>
<dbReference type="InterPro" id="IPR001737">
    <property type="entry name" value="KsgA/Erm"/>
</dbReference>
<dbReference type="InterPro" id="IPR023165">
    <property type="entry name" value="rRNA_Ade_diMease-like_C"/>
</dbReference>
<dbReference type="InterPro" id="IPR020596">
    <property type="entry name" value="rRNA_Ade_Mease_Trfase_CS"/>
</dbReference>
<dbReference type="InterPro" id="IPR020598">
    <property type="entry name" value="rRNA_Ade_methylase_Trfase_N"/>
</dbReference>
<dbReference type="InterPro" id="IPR011530">
    <property type="entry name" value="rRNA_adenine_dimethylase"/>
</dbReference>
<dbReference type="InterPro" id="IPR029063">
    <property type="entry name" value="SAM-dependent_MTases_sf"/>
</dbReference>
<dbReference type="NCBIfam" id="TIGR00755">
    <property type="entry name" value="ksgA"/>
    <property type="match status" value="1"/>
</dbReference>
<dbReference type="PANTHER" id="PTHR11727">
    <property type="entry name" value="DIMETHYLADENOSINE TRANSFERASE"/>
    <property type="match status" value="1"/>
</dbReference>
<dbReference type="PANTHER" id="PTHR11727:SF7">
    <property type="entry name" value="DIMETHYLADENOSINE TRANSFERASE-RELATED"/>
    <property type="match status" value="1"/>
</dbReference>
<dbReference type="Pfam" id="PF00398">
    <property type="entry name" value="RrnaAD"/>
    <property type="match status" value="1"/>
</dbReference>
<dbReference type="SMART" id="SM00650">
    <property type="entry name" value="rADc"/>
    <property type="match status" value="1"/>
</dbReference>
<dbReference type="SUPFAM" id="SSF53335">
    <property type="entry name" value="S-adenosyl-L-methionine-dependent methyltransferases"/>
    <property type="match status" value="1"/>
</dbReference>
<dbReference type="PROSITE" id="PS01131">
    <property type="entry name" value="RRNA_A_DIMETH"/>
    <property type="match status" value="1"/>
</dbReference>
<dbReference type="PROSITE" id="PS51689">
    <property type="entry name" value="SAM_RNA_A_N6_MT"/>
    <property type="match status" value="1"/>
</dbReference>
<protein>
    <recommendedName>
        <fullName evidence="1">Ribosomal RNA small subunit methyltransferase A</fullName>
        <ecNumber evidence="1">2.1.1.182</ecNumber>
    </recommendedName>
    <alternativeName>
        <fullName evidence="1">16S rRNA (adenine(1518)-N(6)/adenine(1519)-N(6))-dimethyltransferase</fullName>
    </alternativeName>
    <alternativeName>
        <fullName evidence="1">16S rRNA dimethyladenosine transferase</fullName>
    </alternativeName>
    <alternativeName>
        <fullName evidence="1">16S rRNA dimethylase</fullName>
    </alternativeName>
    <alternativeName>
        <fullName evidence="1">S-adenosylmethionine-6-N', N'-adenosyl(rRNA) dimethyltransferase</fullName>
    </alternativeName>
</protein>
<accession>Q7VM33</accession>